<feature type="chain" id="PRO_0000310939" description="Neuraminidase">
    <location>
        <begin position="1"/>
        <end position="449"/>
    </location>
</feature>
<feature type="topological domain" description="Intravirion" evidence="1">
    <location>
        <begin position="1"/>
        <end position="6"/>
    </location>
</feature>
<feature type="transmembrane region" description="Helical" evidence="1">
    <location>
        <begin position="7"/>
        <end position="27"/>
    </location>
</feature>
<feature type="topological domain" description="Virion surface" evidence="1">
    <location>
        <begin position="28"/>
        <end position="449"/>
    </location>
</feature>
<feature type="region of interest" description="Involved in apical transport and lipid raft association" evidence="1">
    <location>
        <begin position="11"/>
        <end position="33"/>
    </location>
</feature>
<feature type="region of interest" description="Hypervariable stalk region" evidence="1">
    <location>
        <begin position="36"/>
        <end position="70"/>
    </location>
</feature>
<feature type="region of interest" description="Head of neuraminidase" evidence="1">
    <location>
        <begin position="71"/>
        <end position="449"/>
    </location>
</feature>
<feature type="active site" description="Proton donor/acceptor" evidence="1">
    <location>
        <position position="131"/>
    </location>
</feature>
<feature type="active site" description="Nucleophile" evidence="1">
    <location>
        <position position="382"/>
    </location>
</feature>
<feature type="binding site" evidence="1">
    <location>
        <position position="98"/>
    </location>
    <ligand>
        <name>substrate</name>
    </ligand>
</feature>
<feature type="binding site" evidence="1">
    <location>
        <position position="132"/>
    </location>
    <ligand>
        <name>substrate</name>
    </ligand>
</feature>
<feature type="binding site" evidence="1">
    <location>
        <begin position="257"/>
        <end position="258"/>
    </location>
    <ligand>
        <name>substrate</name>
    </ligand>
</feature>
<feature type="binding site" evidence="1">
    <location>
        <position position="273"/>
    </location>
    <ligand>
        <name>substrate</name>
    </ligand>
</feature>
<feature type="binding site" evidence="1">
    <location>
        <position position="274"/>
    </location>
    <ligand>
        <name>Ca(2+)</name>
        <dbReference type="ChEBI" id="CHEBI:29108"/>
    </ligand>
</feature>
<feature type="binding site" evidence="1">
    <location>
        <position position="278"/>
    </location>
    <ligand>
        <name>Ca(2+)</name>
        <dbReference type="ChEBI" id="CHEBI:29108"/>
    </ligand>
</feature>
<feature type="binding site" evidence="1">
    <location>
        <position position="304"/>
    </location>
    <ligand>
        <name>Ca(2+)</name>
        <dbReference type="ChEBI" id="CHEBI:29108"/>
    </ligand>
</feature>
<feature type="binding site" evidence="1">
    <location>
        <position position="348"/>
    </location>
    <ligand>
        <name>substrate</name>
    </ligand>
</feature>
<feature type="glycosylation site" description="N-linked (GlcNAc...) asparagine; by host" evidence="1">
    <location>
        <position position="68"/>
    </location>
</feature>
<feature type="glycosylation site" description="N-linked (GlcNAc...) asparagine; by host" evidence="1">
    <location>
        <position position="126"/>
    </location>
</feature>
<feature type="glycosylation site" description="N-linked (GlcNAc...) asparagine; by host" evidence="1">
    <location>
        <position position="215"/>
    </location>
</feature>
<feature type="disulfide bond" evidence="1">
    <location>
        <begin position="72"/>
        <end position="397"/>
    </location>
</feature>
<feature type="disulfide bond" evidence="1">
    <location>
        <begin position="104"/>
        <end position="109"/>
    </location>
</feature>
<feature type="disulfide bond" evidence="1">
    <location>
        <begin position="164"/>
        <end position="211"/>
    </location>
</feature>
<feature type="disulfide bond" evidence="1">
    <location>
        <begin position="213"/>
        <end position="218"/>
    </location>
</feature>
<feature type="disulfide bond" evidence="1">
    <location>
        <begin position="259"/>
        <end position="272"/>
    </location>
</feature>
<feature type="disulfide bond" evidence="1">
    <location>
        <begin position="261"/>
        <end position="270"/>
    </location>
</feature>
<feature type="disulfide bond" evidence="1">
    <location>
        <begin position="298"/>
        <end position="315"/>
    </location>
</feature>
<feature type="disulfide bond" evidence="1">
    <location>
        <begin position="401"/>
        <end position="426"/>
    </location>
</feature>
<gene>
    <name evidence="1" type="primary">NA</name>
</gene>
<organismHost>
    <name type="scientific">Aves</name>
    <dbReference type="NCBI Taxonomy" id="8782"/>
</organismHost>
<organismHost>
    <name type="scientific">Felis catus</name>
    <name type="common">Cat</name>
    <name type="synonym">Felis silvestris catus</name>
    <dbReference type="NCBI Taxonomy" id="9685"/>
</organismHost>
<organismHost>
    <name type="scientific">Homo sapiens</name>
    <name type="common">Human</name>
    <dbReference type="NCBI Taxonomy" id="9606"/>
</organismHost>
<organismHost>
    <name type="scientific">Panthera pardus</name>
    <name type="common">Leopard</name>
    <name type="synonym">Felis pardus</name>
    <dbReference type="NCBI Taxonomy" id="9691"/>
</organismHost>
<organismHost>
    <name type="scientific">Panthera tigris</name>
    <name type="common">Tiger</name>
    <dbReference type="NCBI Taxonomy" id="9694"/>
</organismHost>
<organismHost>
    <name type="scientific">Sus scrofa</name>
    <name type="common">Pig</name>
    <dbReference type="NCBI Taxonomy" id="9823"/>
</organismHost>
<dbReference type="EC" id="3.2.1.18" evidence="1"/>
<dbReference type="EMBL" id="AY651461">
    <property type="protein sequence ID" value="AAT73343.2"/>
    <property type="molecule type" value="Genomic_RNA"/>
</dbReference>
<dbReference type="SMR" id="Q6DPJ8"/>
<dbReference type="CAZy" id="GH34">
    <property type="family name" value="Glycoside Hydrolase Family 34"/>
</dbReference>
<dbReference type="GlyCosmos" id="Q6DPJ8">
    <property type="glycosylation" value="3 sites, No reported glycans"/>
</dbReference>
<dbReference type="GO" id="GO:0020002">
    <property type="term" value="C:host cell plasma membrane"/>
    <property type="evidence" value="ECO:0007669"/>
    <property type="project" value="UniProtKB-SubCell"/>
</dbReference>
<dbReference type="GO" id="GO:0016020">
    <property type="term" value="C:membrane"/>
    <property type="evidence" value="ECO:0007669"/>
    <property type="project" value="UniProtKB-UniRule"/>
</dbReference>
<dbReference type="GO" id="GO:0055036">
    <property type="term" value="C:virion membrane"/>
    <property type="evidence" value="ECO:0007669"/>
    <property type="project" value="UniProtKB-SubCell"/>
</dbReference>
<dbReference type="GO" id="GO:0004308">
    <property type="term" value="F:exo-alpha-sialidase activity"/>
    <property type="evidence" value="ECO:0007669"/>
    <property type="project" value="UniProtKB-UniRule"/>
</dbReference>
<dbReference type="GO" id="GO:0046872">
    <property type="term" value="F:metal ion binding"/>
    <property type="evidence" value="ECO:0007669"/>
    <property type="project" value="UniProtKB-UniRule"/>
</dbReference>
<dbReference type="GO" id="GO:0005975">
    <property type="term" value="P:carbohydrate metabolic process"/>
    <property type="evidence" value="ECO:0007669"/>
    <property type="project" value="InterPro"/>
</dbReference>
<dbReference type="GO" id="GO:0046761">
    <property type="term" value="P:viral budding from plasma membrane"/>
    <property type="evidence" value="ECO:0007669"/>
    <property type="project" value="UniProtKB-UniRule"/>
</dbReference>
<dbReference type="CDD" id="cd15483">
    <property type="entry name" value="Influenza_NA"/>
    <property type="match status" value="1"/>
</dbReference>
<dbReference type="FunFam" id="2.120.10.10:FF:000001">
    <property type="entry name" value="Neuraminidase"/>
    <property type="match status" value="1"/>
</dbReference>
<dbReference type="Gene3D" id="2.120.10.10">
    <property type="match status" value="1"/>
</dbReference>
<dbReference type="HAMAP" id="MF_04071">
    <property type="entry name" value="INFV_NRAM"/>
    <property type="match status" value="1"/>
</dbReference>
<dbReference type="InterPro" id="IPR001860">
    <property type="entry name" value="Glyco_hydro_34"/>
</dbReference>
<dbReference type="InterPro" id="IPR033654">
    <property type="entry name" value="Sialidase_Influenza_A/B"/>
</dbReference>
<dbReference type="InterPro" id="IPR036278">
    <property type="entry name" value="Sialidase_sf"/>
</dbReference>
<dbReference type="Pfam" id="PF00064">
    <property type="entry name" value="Neur"/>
    <property type="match status" value="1"/>
</dbReference>
<dbReference type="SUPFAM" id="SSF50939">
    <property type="entry name" value="Sialidases"/>
    <property type="match status" value="1"/>
</dbReference>
<organism>
    <name type="scientific">Influenza A virus (strain A/Chicken/Hong Kong/YU22/2002 H5N1 genotype Z)</name>
    <dbReference type="NCBI Taxonomy" id="284177"/>
    <lineage>
        <taxon>Viruses</taxon>
        <taxon>Riboviria</taxon>
        <taxon>Orthornavirae</taxon>
        <taxon>Negarnaviricota</taxon>
        <taxon>Polyploviricotina</taxon>
        <taxon>Insthoviricetes</taxon>
        <taxon>Articulavirales</taxon>
        <taxon>Orthomyxoviridae</taxon>
        <taxon>Alphainfluenzavirus</taxon>
        <taxon>Alphainfluenzavirus influenzae</taxon>
        <taxon>Influenza A virus</taxon>
    </lineage>
</organism>
<accession>Q6DPJ8</accession>
<comment type="function">
    <text evidence="1">Catalyzes the removal of terminal sialic acid residues from viral and cellular glycoconjugates. Cleaves off the terminal sialic acids on the glycosylated HA during virus budding to facilitate virus release. Additionally helps virus spread through the circulation by further removing sialic acids from the cell surface. These cleavages prevent self-aggregation and ensure the efficient spread of the progeny virus from cell to cell. Otherwise, infection would be limited to one round of replication. Described as a receptor-destroying enzyme because it cleaves a terminal sialic acid from the cellular receptors. May facilitate viral invasion of the upper airways by cleaving the sialic acid moieties on the mucin of the airway epithelial cells. Likely to plays a role in the budding process through its association with lipid rafts during intracellular transport. May additionally display a raft-association independent effect on budding. Plays a role in the determination of host range restriction on replication and virulence. Sialidase activity in late endosome/lysosome traffic seems to enhance virus replication.</text>
</comment>
<comment type="catalytic activity">
    <reaction evidence="1">
        <text>Hydrolysis of alpha-(2-&gt;3)-, alpha-(2-&gt;6)-, alpha-(2-&gt;8)- glycosidic linkages of terminal sialic acid residues in oligosaccharides, glycoproteins, glycolipids, colominic acid and synthetic substrates.</text>
        <dbReference type="EC" id="3.2.1.18"/>
    </reaction>
</comment>
<comment type="cofactor">
    <cofactor evidence="1">
        <name>Ca(2+)</name>
        <dbReference type="ChEBI" id="CHEBI:29108"/>
    </cofactor>
</comment>
<comment type="activity regulation">
    <text evidence="1">Inhibited by the neuraminidase inhibitors zanamivir (Relenza) and oseltamivir (Tamiflu). These drugs interfere with the release of progeny virus from infected cells and are effective against all influenza strains. Resistance to neuraminidase inhibitors is quite rare.</text>
</comment>
<comment type="subunit">
    <text evidence="1">Homotetramer.</text>
</comment>
<comment type="subcellular location">
    <subcellularLocation>
        <location evidence="1">Virion membrane</location>
    </subcellularLocation>
    <subcellularLocation>
        <location evidence="1">Host apical cell membrane</location>
        <topology evidence="1">Single-pass type II membrane protein</topology>
    </subcellularLocation>
    <text evidence="1">Preferentially accumulates at the apical plasma membrane in infected polarized epithelial cells, which is the virus assembly site. Uses lipid rafts for cell surface transport and apical sorting. In the virion, forms a mushroom-shaped spike on the surface of the membrane.</text>
</comment>
<comment type="domain">
    <text evidence="1">Intact N-terminus is essential for virion morphogenesis. Possesses two apical sorting signals, one in the ectodomain, which is likely to be a glycan, and the other in the transmembrane domain. The transmembrane domain also plays a role in lipid raft association.</text>
</comment>
<comment type="PTM">
    <text evidence="1">N-glycosylated.</text>
</comment>
<comment type="miscellaneous">
    <text>The influenza A genome consist of 8 RNA segments. Genetic variation of hemagglutinin and/or neuraminidase genes results in the emergence of new influenza strains. The mechanism of variation can be the result of point mutations or the result of genetic reassortment between segments of two different strains.</text>
</comment>
<comment type="similarity">
    <text evidence="1">Belongs to the glycosyl hydrolase 34 family.</text>
</comment>
<reference key="1">
    <citation type="journal article" date="2004" name="Nature">
        <title>Genesis of a highly pathogenic and potentially pandemic H5N1 influenza virus in eastern Asia.</title>
        <authorList>
            <person name="Li K.S."/>
            <person name="Guan Y."/>
            <person name="Wang J."/>
            <person name="Smith G.J.D."/>
            <person name="Xu K.M."/>
            <person name="Duan L."/>
            <person name="Rahardjo A.P."/>
            <person name="Puthavathana P."/>
            <person name="Buranathai C."/>
            <person name="Nguyen T.D."/>
            <person name="Estoepangestie A.T.S."/>
            <person name="Chaisingh A."/>
            <person name="Auewarakul P."/>
            <person name="Long H.T."/>
            <person name="Hanh N.T.H."/>
            <person name="Webby R.J."/>
            <person name="Poon L.L.M."/>
            <person name="Chen H."/>
            <person name="Shortridge K.F."/>
            <person name="Yuen K.Y."/>
            <person name="Webster R.G."/>
            <person name="Peiris J.S.M."/>
        </authorList>
    </citation>
    <scope>NUCLEOTIDE SEQUENCE [GENOMIC RNA]</scope>
</reference>
<reference key="2">
    <citation type="submission" date="2008-03" db="EMBL/GenBank/DDBJ databases">
        <authorList>
            <person name="Li K.S."/>
            <person name="Guan Y."/>
            <person name="Wang J."/>
            <person name="Smith G.J.D."/>
            <person name="Xu K.M."/>
            <person name="Duan L."/>
            <person name="Rahardjo A.P."/>
            <person name="Puthavathana P."/>
            <person name="Buranathai C."/>
            <person name="Nguyen T.D."/>
            <person name="Estoepangestie A.T.S."/>
            <person name="Chaisingh A."/>
            <person name="Auewarakul P."/>
            <person name="Long H.T."/>
            <person name="Hanh N.T.H."/>
            <person name="Lim W."/>
            <person name="Webby R.J."/>
            <person name="Poon L.L.M."/>
            <person name="Chen H."/>
            <person name="Shortridge K.F."/>
            <person name="Yuen K.Y."/>
            <person name="Webster R.G."/>
            <person name="Peiris J.S.M."/>
        </authorList>
    </citation>
    <scope>SEQUENCE REVISION</scope>
</reference>
<name>NRAM_I02A6</name>
<sequence>MNPNQKIITIGSICMVIGIVSLMLQIGNMISIWVSHSIQTGNQHQAEPISNTNFLTEKAVASVTLAGNSSLCPISGWAVHSKDNSIRIGSKGDVFVIREPFISCSHLECRTFFLTQGALLNDKHSNGTVKDRSPHRTLMSCPVGEAPSPYNSRFESVAWSASACHDGTSWLTIGISGPDNGAVAVLKYNGIITDTIKSWRNNILRTQESECACVNGSCFTVMTDGPSNGQASYKIFKMEKGKVVKSVELDAPNYHYEECSCYPDAGEITCVCRDNWHGSNRPWVSFNQNLEYQIGYICSGVFGDNPRPNDGTGSCGPVSPNGAYGVKGFSFKYGNGVWIGRTKSTNSRSGFEMIWDPNGWTGTDSSFSVKQDIVAITDWSGYSGSFVQHPELTGLDCIRPCFWVELIRGRPKESTIWTSGSSISFCGVNSDTVGWSWPDGAELPFTIDK</sequence>
<proteinExistence type="inferred from homology"/>
<protein>
    <recommendedName>
        <fullName evidence="1">Neuraminidase</fullName>
        <ecNumber evidence="1">3.2.1.18</ecNumber>
    </recommendedName>
</protein>
<evidence type="ECO:0000255" key="1">
    <source>
        <dbReference type="HAMAP-Rule" id="MF_04071"/>
    </source>
</evidence>
<keyword id="KW-0106">Calcium</keyword>
<keyword id="KW-1015">Disulfide bond</keyword>
<keyword id="KW-0325">Glycoprotein</keyword>
<keyword id="KW-0326">Glycosidase</keyword>
<keyword id="KW-1032">Host cell membrane</keyword>
<keyword id="KW-1043">Host membrane</keyword>
<keyword id="KW-0378">Hydrolase</keyword>
<keyword id="KW-0472">Membrane</keyword>
<keyword id="KW-0479">Metal-binding</keyword>
<keyword id="KW-0735">Signal-anchor</keyword>
<keyword id="KW-0812">Transmembrane</keyword>
<keyword id="KW-1133">Transmembrane helix</keyword>
<keyword id="KW-0946">Virion</keyword>